<name>S27A4_HUMAN</name>
<evidence type="ECO:0000250" key="1">
    <source>
        <dbReference type="UniProtKB" id="Q91VE0"/>
    </source>
</evidence>
<evidence type="ECO:0000255" key="2"/>
<evidence type="ECO:0000269" key="3">
    <source>
    </source>
</evidence>
<evidence type="ECO:0000269" key="4">
    <source>
    </source>
</evidence>
<evidence type="ECO:0000269" key="5">
    <source>
    </source>
</evidence>
<evidence type="ECO:0000269" key="6">
    <source>
    </source>
</evidence>
<evidence type="ECO:0000269" key="7">
    <source>
    </source>
</evidence>
<evidence type="ECO:0000269" key="8">
    <source>
    </source>
</evidence>
<evidence type="ECO:0000269" key="9">
    <source>
    </source>
</evidence>
<evidence type="ECO:0000269" key="10">
    <source>
    </source>
</evidence>
<evidence type="ECO:0000269" key="11">
    <source>
    </source>
</evidence>
<evidence type="ECO:0000269" key="12">
    <source>
    </source>
</evidence>
<evidence type="ECO:0000303" key="13">
    <source>
    </source>
</evidence>
<evidence type="ECO:0000303" key="14">
    <source>
    </source>
</evidence>
<evidence type="ECO:0000303" key="15">
    <source>
    </source>
</evidence>
<evidence type="ECO:0000305" key="16"/>
<evidence type="ECO:0000305" key="17">
    <source>
    </source>
</evidence>
<evidence type="ECO:0000305" key="18">
    <source>
    </source>
</evidence>
<evidence type="ECO:0000312" key="19">
    <source>
        <dbReference type="HGNC" id="HGNC:10998"/>
    </source>
</evidence>
<proteinExistence type="evidence at protein level"/>
<accession>Q6P1M0</accession>
<accession>A8K2F7</accession>
<accession>O95186</accession>
<accession>Q96G53</accession>
<dbReference type="EC" id="6.2.1.15" evidence="1"/>
<dbReference type="EC" id="6.2.1.3" evidence="10 11"/>
<dbReference type="EC" id="6.2.1.-" evidence="1"/>
<dbReference type="EMBL" id="AF055899">
    <property type="protein sequence ID" value="AAD11623.1"/>
    <property type="status" value="ALT_FRAME"/>
    <property type="molecule type" value="mRNA"/>
</dbReference>
<dbReference type="EMBL" id="AK290222">
    <property type="protein sequence ID" value="BAF82911.1"/>
    <property type="molecule type" value="mRNA"/>
</dbReference>
<dbReference type="EMBL" id="AL359091">
    <property type="status" value="NOT_ANNOTATED_CDS"/>
    <property type="molecule type" value="Genomic_DNA"/>
</dbReference>
<dbReference type="EMBL" id="CH471090">
    <property type="protein sequence ID" value="EAW87779.1"/>
    <property type="molecule type" value="Genomic_DNA"/>
</dbReference>
<dbReference type="EMBL" id="BC009959">
    <property type="protein sequence ID" value="AAH09959.1"/>
    <property type="molecule type" value="mRNA"/>
</dbReference>
<dbReference type="EMBL" id="BC065003">
    <property type="protein sequence ID" value="AAH65003.1"/>
    <property type="molecule type" value="mRNA"/>
</dbReference>
<dbReference type="CCDS" id="CCDS6899.1">
    <molecule id="Q6P1M0-1"/>
</dbReference>
<dbReference type="RefSeq" id="NP_005085.2">
    <molecule id="Q6P1M0-1"/>
    <property type="nucleotide sequence ID" value="NM_005094.3"/>
</dbReference>
<dbReference type="RefSeq" id="XP_016869711.1">
    <molecule id="Q6P1M0-1"/>
    <property type="nucleotide sequence ID" value="XM_017014222.2"/>
</dbReference>
<dbReference type="RefSeq" id="XP_024303159.1">
    <molecule id="Q6P1M0-1"/>
    <property type="nucleotide sequence ID" value="XM_024447391.2"/>
</dbReference>
<dbReference type="RefSeq" id="XP_054217791.1">
    <molecule id="Q6P1M0-1"/>
    <property type="nucleotide sequence ID" value="XM_054361816.1"/>
</dbReference>
<dbReference type="SMR" id="Q6P1M0"/>
<dbReference type="BioGRID" id="116192">
    <property type="interactions" value="163"/>
</dbReference>
<dbReference type="FunCoup" id="Q6P1M0">
    <property type="interactions" value="980"/>
</dbReference>
<dbReference type="IntAct" id="Q6P1M0">
    <property type="interactions" value="74"/>
</dbReference>
<dbReference type="MINT" id="Q6P1M0"/>
<dbReference type="STRING" id="9606.ENSP00000300456"/>
<dbReference type="BindingDB" id="Q6P1M0"/>
<dbReference type="ChEMBL" id="CHEMBL4327"/>
<dbReference type="GuidetoPHARMACOLOGY" id="1111"/>
<dbReference type="SwissLipids" id="SLP:000000451"/>
<dbReference type="TCDB" id="4.C.1.1.10">
    <property type="family name" value="the fatty acid group translocation (fat) family"/>
</dbReference>
<dbReference type="GlyGen" id="Q6P1M0">
    <property type="glycosylation" value="2 sites, 2 N-linked glycans (2 sites)"/>
</dbReference>
<dbReference type="iPTMnet" id="Q6P1M0"/>
<dbReference type="MetOSite" id="Q6P1M0"/>
<dbReference type="PhosphoSitePlus" id="Q6P1M0"/>
<dbReference type="SwissPalm" id="Q6P1M0"/>
<dbReference type="BioMuta" id="SLC27A4"/>
<dbReference type="DMDM" id="74749065"/>
<dbReference type="jPOST" id="Q6P1M0"/>
<dbReference type="MassIVE" id="Q6P1M0"/>
<dbReference type="PaxDb" id="9606-ENSP00000300456"/>
<dbReference type="PeptideAtlas" id="Q6P1M0"/>
<dbReference type="ProteomicsDB" id="66849">
    <molecule id="Q6P1M0-1"/>
</dbReference>
<dbReference type="ProteomicsDB" id="76596"/>
<dbReference type="Pumba" id="Q6P1M0"/>
<dbReference type="Antibodypedia" id="1947">
    <property type="antibodies" value="156 antibodies from 32 providers"/>
</dbReference>
<dbReference type="DNASU" id="10999"/>
<dbReference type="Ensembl" id="ENST00000300456.5">
    <molecule id="Q6P1M0-1"/>
    <property type="protein sequence ID" value="ENSP00000300456.3"/>
    <property type="gene ID" value="ENSG00000167114.13"/>
</dbReference>
<dbReference type="Ensembl" id="ENST00000372870.5">
    <molecule id="Q6P1M0-2"/>
    <property type="protein sequence ID" value="ENSP00000361961.1"/>
    <property type="gene ID" value="ENSG00000167114.13"/>
</dbReference>
<dbReference type="GeneID" id="10999"/>
<dbReference type="KEGG" id="hsa:10999"/>
<dbReference type="MANE-Select" id="ENST00000300456.5">
    <property type="protein sequence ID" value="ENSP00000300456.3"/>
    <property type="RefSeq nucleotide sequence ID" value="NM_005094.4"/>
    <property type="RefSeq protein sequence ID" value="NP_005085.2"/>
</dbReference>
<dbReference type="UCSC" id="uc004but.4">
    <molecule id="Q6P1M0-1"/>
    <property type="organism name" value="human"/>
</dbReference>
<dbReference type="AGR" id="HGNC:10998"/>
<dbReference type="CTD" id="10999"/>
<dbReference type="DisGeNET" id="10999"/>
<dbReference type="GeneCards" id="SLC27A4"/>
<dbReference type="GeneReviews" id="SLC27A4"/>
<dbReference type="HGNC" id="HGNC:10998">
    <property type="gene designation" value="SLC27A4"/>
</dbReference>
<dbReference type="HPA" id="ENSG00000167114">
    <property type="expression patterns" value="Low tissue specificity"/>
</dbReference>
<dbReference type="MalaCards" id="SLC27A4"/>
<dbReference type="MIM" id="604194">
    <property type="type" value="gene"/>
</dbReference>
<dbReference type="MIM" id="608649">
    <property type="type" value="phenotype"/>
</dbReference>
<dbReference type="neXtProt" id="NX_Q6P1M0"/>
<dbReference type="OpenTargets" id="ENSG00000167114"/>
<dbReference type="Orphanet" id="88621">
    <property type="disease" value="Ichthyosis-prematurity syndrome"/>
</dbReference>
<dbReference type="PharmGKB" id="PA35872"/>
<dbReference type="VEuPathDB" id="HostDB:ENSG00000167114"/>
<dbReference type="eggNOG" id="KOG1179">
    <property type="taxonomic scope" value="Eukaryota"/>
</dbReference>
<dbReference type="GeneTree" id="ENSGT00940000158646"/>
<dbReference type="HOGENOM" id="CLU_1170347_0_0_1"/>
<dbReference type="InParanoid" id="Q6P1M0"/>
<dbReference type="OMA" id="WRFIRIF"/>
<dbReference type="OrthoDB" id="288590at2759"/>
<dbReference type="PAN-GO" id="Q6P1M0">
    <property type="GO annotations" value="9 GO annotations based on evolutionary models"/>
</dbReference>
<dbReference type="PhylomeDB" id="Q6P1M0"/>
<dbReference type="TreeFam" id="TF313430"/>
<dbReference type="BioCyc" id="MetaCyc:ENSG00000167114-MONOMER"/>
<dbReference type="BRENDA" id="6.2.1.3">
    <property type="organism ID" value="2681"/>
</dbReference>
<dbReference type="PathwayCommons" id="Q6P1M0"/>
<dbReference type="Reactome" id="R-HSA-5619108">
    <property type="pathway name" value="Defective SLC27A4 causes ichthyosis prematurity syndrome (IPS)"/>
</dbReference>
<dbReference type="Reactome" id="R-HSA-804914">
    <property type="pathway name" value="Transport of fatty acids"/>
</dbReference>
<dbReference type="SignaLink" id="Q6P1M0"/>
<dbReference type="SIGNOR" id="Q6P1M0"/>
<dbReference type="BioGRID-ORCS" id="10999">
    <property type="hits" value="8 hits in 1153 CRISPR screens"/>
</dbReference>
<dbReference type="CD-CODE" id="FB4E32DD">
    <property type="entry name" value="Presynaptic clusters and postsynaptic densities"/>
</dbReference>
<dbReference type="ChiTaRS" id="SLC27A4">
    <property type="organism name" value="human"/>
</dbReference>
<dbReference type="GeneWiki" id="SLC27A4"/>
<dbReference type="GenomeRNAi" id="10999"/>
<dbReference type="Pharos" id="Q6P1M0">
    <property type="development level" value="Tchem"/>
</dbReference>
<dbReference type="PRO" id="PR:Q6P1M0"/>
<dbReference type="Proteomes" id="UP000005640">
    <property type="component" value="Chromosome 9"/>
</dbReference>
<dbReference type="RNAct" id="Q6P1M0">
    <property type="molecule type" value="protein"/>
</dbReference>
<dbReference type="Bgee" id="ENSG00000167114">
    <property type="expression patterns" value="Expressed in mucosa of transverse colon and 154 other cell types or tissues"/>
</dbReference>
<dbReference type="ExpressionAtlas" id="Q6P1M0">
    <property type="expression patterns" value="baseline and differential"/>
</dbReference>
<dbReference type="GO" id="GO:0031526">
    <property type="term" value="C:brush border membrane"/>
    <property type="evidence" value="ECO:0007669"/>
    <property type="project" value="Ensembl"/>
</dbReference>
<dbReference type="GO" id="GO:0005783">
    <property type="term" value="C:endoplasmic reticulum"/>
    <property type="evidence" value="ECO:0000314"/>
    <property type="project" value="ARUK-UCL"/>
</dbReference>
<dbReference type="GO" id="GO:0005789">
    <property type="term" value="C:endoplasmic reticulum membrane"/>
    <property type="evidence" value="ECO:0000314"/>
    <property type="project" value="UniProtKB"/>
</dbReference>
<dbReference type="GO" id="GO:0016020">
    <property type="term" value="C:membrane"/>
    <property type="evidence" value="ECO:0007005"/>
    <property type="project" value="UniProtKB"/>
</dbReference>
<dbReference type="GO" id="GO:0005902">
    <property type="term" value="C:microvillus"/>
    <property type="evidence" value="ECO:0007669"/>
    <property type="project" value="Ensembl"/>
</dbReference>
<dbReference type="GO" id="GO:0005886">
    <property type="term" value="C:plasma membrane"/>
    <property type="evidence" value="ECO:0000318"/>
    <property type="project" value="GO_Central"/>
</dbReference>
<dbReference type="GO" id="GO:0047676">
    <property type="term" value="F:arachidonate-CoA ligase activity"/>
    <property type="evidence" value="ECO:0007669"/>
    <property type="project" value="UniProtKB-EC"/>
</dbReference>
<dbReference type="GO" id="GO:0015245">
    <property type="term" value="F:fatty acid transmembrane transporter activity"/>
    <property type="evidence" value="ECO:0000304"/>
    <property type="project" value="Reactome"/>
</dbReference>
<dbReference type="GO" id="GO:0005324">
    <property type="term" value="F:long-chain fatty acid transmembrane transporter activity"/>
    <property type="evidence" value="ECO:0000315"/>
    <property type="project" value="ARUK-UCL"/>
</dbReference>
<dbReference type="GO" id="GO:0004467">
    <property type="term" value="F:long-chain fatty acid-CoA ligase activity"/>
    <property type="evidence" value="ECO:0000314"/>
    <property type="project" value="UniProtKB"/>
</dbReference>
<dbReference type="GO" id="GO:0000166">
    <property type="term" value="F:nucleotide binding"/>
    <property type="evidence" value="ECO:0007669"/>
    <property type="project" value="UniProtKB-KW"/>
</dbReference>
<dbReference type="GO" id="GO:0090434">
    <property type="term" value="F:oleoyl-CoA ligase activity"/>
    <property type="evidence" value="ECO:0000314"/>
    <property type="project" value="ARUK-UCL"/>
</dbReference>
<dbReference type="GO" id="GO:0090433">
    <property type="term" value="F:palmitoyl-CoA ligase activity"/>
    <property type="evidence" value="ECO:0000314"/>
    <property type="project" value="ARUK-UCL"/>
</dbReference>
<dbReference type="GO" id="GO:0031957">
    <property type="term" value="F:very long-chain fatty acid-CoA ligase activity"/>
    <property type="evidence" value="ECO:0007669"/>
    <property type="project" value="Ensembl"/>
</dbReference>
<dbReference type="GO" id="GO:0051649">
    <property type="term" value="P:establishment of localization in cell"/>
    <property type="evidence" value="ECO:0007669"/>
    <property type="project" value="Ensembl"/>
</dbReference>
<dbReference type="GO" id="GO:0006631">
    <property type="term" value="P:fatty acid metabolic process"/>
    <property type="evidence" value="ECO:0000314"/>
    <property type="project" value="ARUK-UCL"/>
</dbReference>
<dbReference type="GO" id="GO:0015908">
    <property type="term" value="P:fatty acid transport"/>
    <property type="evidence" value="ECO:0000315"/>
    <property type="project" value="ARUK-UCL"/>
</dbReference>
<dbReference type="GO" id="GO:0044381">
    <property type="term" value="P:glucose import in response to insulin stimulus"/>
    <property type="evidence" value="ECO:0000250"/>
    <property type="project" value="ARUK-UCL"/>
</dbReference>
<dbReference type="GO" id="GO:1990379">
    <property type="term" value="P:lipid transport across blood-brain barrier"/>
    <property type="evidence" value="ECO:0000315"/>
    <property type="project" value="ARUK-UCL"/>
</dbReference>
<dbReference type="GO" id="GO:0044539">
    <property type="term" value="P:long-chain fatty acid import into cell"/>
    <property type="evidence" value="ECO:0000314"/>
    <property type="project" value="UniProtKB"/>
</dbReference>
<dbReference type="GO" id="GO:0001676">
    <property type="term" value="P:long-chain fatty acid metabolic process"/>
    <property type="evidence" value="ECO:0000314"/>
    <property type="project" value="UniProtKB"/>
</dbReference>
<dbReference type="GO" id="GO:0015909">
    <property type="term" value="P:long-chain fatty acid transport"/>
    <property type="evidence" value="ECO:0000315"/>
    <property type="project" value="ARUK-UCL"/>
</dbReference>
<dbReference type="GO" id="GO:0001579">
    <property type="term" value="P:medium-chain fatty acid transport"/>
    <property type="evidence" value="ECO:0000318"/>
    <property type="project" value="GO_Central"/>
</dbReference>
<dbReference type="GO" id="GO:0046627">
    <property type="term" value="P:negative regulation of insulin receptor signaling pathway"/>
    <property type="evidence" value="ECO:0000314"/>
    <property type="project" value="ARUK-UCL"/>
</dbReference>
<dbReference type="GO" id="GO:0043065">
    <property type="term" value="P:positive regulation of apoptotic process"/>
    <property type="evidence" value="ECO:0000314"/>
    <property type="project" value="ARUK-UCL"/>
</dbReference>
<dbReference type="GO" id="GO:0007584">
    <property type="term" value="P:response to nutrient"/>
    <property type="evidence" value="ECO:0007669"/>
    <property type="project" value="Ensembl"/>
</dbReference>
<dbReference type="GO" id="GO:0043588">
    <property type="term" value="P:skin development"/>
    <property type="evidence" value="ECO:0007669"/>
    <property type="project" value="Ensembl"/>
</dbReference>
<dbReference type="GO" id="GO:0150104">
    <property type="term" value="P:transport across blood-brain barrier"/>
    <property type="evidence" value="ECO:0000303"/>
    <property type="project" value="ARUK-UCL"/>
</dbReference>
<dbReference type="GO" id="GO:0042760">
    <property type="term" value="P:very long-chain fatty acid catabolic process"/>
    <property type="evidence" value="ECO:0007669"/>
    <property type="project" value="Ensembl"/>
</dbReference>
<dbReference type="CDD" id="cd05939">
    <property type="entry name" value="hsFATP4_like"/>
    <property type="match status" value="1"/>
</dbReference>
<dbReference type="FunFam" id="3.30.300.30:FF:000002">
    <property type="entry name" value="Long-chain fatty acid transport protein 1"/>
    <property type="match status" value="1"/>
</dbReference>
<dbReference type="FunFam" id="3.40.50.12780:FF:000008">
    <property type="entry name" value="Long-chain fatty acid transport protein 4"/>
    <property type="match status" value="1"/>
</dbReference>
<dbReference type="Gene3D" id="3.30.300.30">
    <property type="match status" value="1"/>
</dbReference>
<dbReference type="Gene3D" id="3.40.50.12780">
    <property type="entry name" value="N-terminal domain of ligase-like"/>
    <property type="match status" value="1"/>
</dbReference>
<dbReference type="InterPro" id="IPR025110">
    <property type="entry name" value="AMP-bd_C"/>
</dbReference>
<dbReference type="InterPro" id="IPR045851">
    <property type="entry name" value="AMP-bd_C_sf"/>
</dbReference>
<dbReference type="InterPro" id="IPR020845">
    <property type="entry name" value="AMP-binding_CS"/>
</dbReference>
<dbReference type="InterPro" id="IPR000873">
    <property type="entry name" value="AMP-dep_synth/lig_dom"/>
</dbReference>
<dbReference type="InterPro" id="IPR042099">
    <property type="entry name" value="ANL_N_sf"/>
</dbReference>
<dbReference type="InterPro" id="IPR022272">
    <property type="entry name" value="Lipocalin_CS"/>
</dbReference>
<dbReference type="NCBIfam" id="NF006134">
    <property type="entry name" value="PRK08279.1"/>
    <property type="match status" value="1"/>
</dbReference>
<dbReference type="PANTHER" id="PTHR43107">
    <property type="entry name" value="LONG-CHAIN FATTY ACID TRANSPORT PROTEIN"/>
    <property type="match status" value="1"/>
</dbReference>
<dbReference type="PANTHER" id="PTHR43107:SF11">
    <property type="entry name" value="LONG-CHAIN FATTY ACID TRANSPORT PROTEIN 4"/>
    <property type="match status" value="1"/>
</dbReference>
<dbReference type="Pfam" id="PF00501">
    <property type="entry name" value="AMP-binding"/>
    <property type="match status" value="1"/>
</dbReference>
<dbReference type="Pfam" id="PF13193">
    <property type="entry name" value="AMP-binding_C"/>
    <property type="match status" value="1"/>
</dbReference>
<dbReference type="SUPFAM" id="SSF56801">
    <property type="entry name" value="Acetyl-CoA synthetase-like"/>
    <property type="match status" value="1"/>
</dbReference>
<dbReference type="PROSITE" id="PS00455">
    <property type="entry name" value="AMP_BINDING"/>
    <property type="match status" value="1"/>
</dbReference>
<reference key="1">
    <citation type="journal article" date="1998" name="Biochim. Biophys. Acta">
        <title>Tissue distribution and cDNA cloning of a human fatty acid transport protein (hsFATP4).</title>
        <authorList>
            <person name="Fitscher B.A."/>
            <person name="Riedel H.D."/>
            <person name="Young K.C."/>
            <person name="Stremmel W."/>
        </authorList>
    </citation>
    <scope>NUCLEOTIDE SEQUENCE [MRNA] (ISOFORM 1)</scope>
    <scope>TISSUE SPECIFICITY</scope>
    <source>
        <tissue>Heart</tissue>
    </source>
</reference>
<reference key="2">
    <citation type="journal article" date="2004" name="Nat. Genet.">
        <title>Complete sequencing and characterization of 21,243 full-length human cDNAs.</title>
        <authorList>
            <person name="Ota T."/>
            <person name="Suzuki Y."/>
            <person name="Nishikawa T."/>
            <person name="Otsuki T."/>
            <person name="Sugiyama T."/>
            <person name="Irie R."/>
            <person name="Wakamatsu A."/>
            <person name="Hayashi K."/>
            <person name="Sato H."/>
            <person name="Nagai K."/>
            <person name="Kimura K."/>
            <person name="Makita H."/>
            <person name="Sekine M."/>
            <person name="Obayashi M."/>
            <person name="Nishi T."/>
            <person name="Shibahara T."/>
            <person name="Tanaka T."/>
            <person name="Ishii S."/>
            <person name="Yamamoto J."/>
            <person name="Saito K."/>
            <person name="Kawai Y."/>
            <person name="Isono Y."/>
            <person name="Nakamura Y."/>
            <person name="Nagahari K."/>
            <person name="Murakami K."/>
            <person name="Yasuda T."/>
            <person name="Iwayanagi T."/>
            <person name="Wagatsuma M."/>
            <person name="Shiratori A."/>
            <person name="Sudo H."/>
            <person name="Hosoiri T."/>
            <person name="Kaku Y."/>
            <person name="Kodaira H."/>
            <person name="Kondo H."/>
            <person name="Sugawara M."/>
            <person name="Takahashi M."/>
            <person name="Kanda K."/>
            <person name="Yokoi T."/>
            <person name="Furuya T."/>
            <person name="Kikkawa E."/>
            <person name="Omura Y."/>
            <person name="Abe K."/>
            <person name="Kamihara K."/>
            <person name="Katsuta N."/>
            <person name="Sato K."/>
            <person name="Tanikawa M."/>
            <person name="Yamazaki M."/>
            <person name="Ninomiya K."/>
            <person name="Ishibashi T."/>
            <person name="Yamashita H."/>
            <person name="Murakawa K."/>
            <person name="Fujimori K."/>
            <person name="Tanai H."/>
            <person name="Kimata M."/>
            <person name="Watanabe M."/>
            <person name="Hiraoka S."/>
            <person name="Chiba Y."/>
            <person name="Ishida S."/>
            <person name="Ono Y."/>
            <person name="Takiguchi S."/>
            <person name="Watanabe S."/>
            <person name="Yosida M."/>
            <person name="Hotuta T."/>
            <person name="Kusano J."/>
            <person name="Kanehori K."/>
            <person name="Takahashi-Fujii A."/>
            <person name="Hara H."/>
            <person name="Tanase T.-O."/>
            <person name="Nomura Y."/>
            <person name="Togiya S."/>
            <person name="Komai F."/>
            <person name="Hara R."/>
            <person name="Takeuchi K."/>
            <person name="Arita M."/>
            <person name="Imose N."/>
            <person name="Musashino K."/>
            <person name="Yuuki H."/>
            <person name="Oshima A."/>
            <person name="Sasaki N."/>
            <person name="Aotsuka S."/>
            <person name="Yoshikawa Y."/>
            <person name="Matsunawa H."/>
            <person name="Ichihara T."/>
            <person name="Shiohata N."/>
            <person name="Sano S."/>
            <person name="Moriya S."/>
            <person name="Momiyama H."/>
            <person name="Satoh N."/>
            <person name="Takami S."/>
            <person name="Terashima Y."/>
            <person name="Suzuki O."/>
            <person name="Nakagawa S."/>
            <person name="Senoh A."/>
            <person name="Mizoguchi H."/>
            <person name="Goto Y."/>
            <person name="Shimizu F."/>
            <person name="Wakebe H."/>
            <person name="Hishigaki H."/>
            <person name="Watanabe T."/>
            <person name="Sugiyama A."/>
            <person name="Takemoto M."/>
            <person name="Kawakami B."/>
            <person name="Yamazaki M."/>
            <person name="Watanabe K."/>
            <person name="Kumagai A."/>
            <person name="Itakura S."/>
            <person name="Fukuzumi Y."/>
            <person name="Fujimori Y."/>
            <person name="Komiyama M."/>
            <person name="Tashiro H."/>
            <person name="Tanigami A."/>
            <person name="Fujiwara T."/>
            <person name="Ono T."/>
            <person name="Yamada K."/>
            <person name="Fujii Y."/>
            <person name="Ozaki K."/>
            <person name="Hirao M."/>
            <person name="Ohmori Y."/>
            <person name="Kawabata A."/>
            <person name="Hikiji T."/>
            <person name="Kobatake N."/>
            <person name="Inagaki H."/>
            <person name="Ikema Y."/>
            <person name="Okamoto S."/>
            <person name="Okitani R."/>
            <person name="Kawakami T."/>
            <person name="Noguchi S."/>
            <person name="Itoh T."/>
            <person name="Shigeta K."/>
            <person name="Senba T."/>
            <person name="Matsumura K."/>
            <person name="Nakajima Y."/>
            <person name="Mizuno T."/>
            <person name="Morinaga M."/>
            <person name="Sasaki M."/>
            <person name="Togashi T."/>
            <person name="Oyama M."/>
            <person name="Hata H."/>
            <person name="Watanabe M."/>
            <person name="Komatsu T."/>
            <person name="Mizushima-Sugano J."/>
            <person name="Satoh T."/>
            <person name="Shirai Y."/>
            <person name="Takahashi Y."/>
            <person name="Nakagawa K."/>
            <person name="Okumura K."/>
            <person name="Nagase T."/>
            <person name="Nomura N."/>
            <person name="Kikuchi H."/>
            <person name="Masuho Y."/>
            <person name="Yamashita R."/>
            <person name="Nakai K."/>
            <person name="Yada T."/>
            <person name="Nakamura Y."/>
            <person name="Ohara O."/>
            <person name="Isogai T."/>
            <person name="Sugano S."/>
        </authorList>
    </citation>
    <scope>NUCLEOTIDE SEQUENCE [LARGE SCALE MRNA] (ISOFORM 1)</scope>
    <source>
        <tissue>Thalamus</tissue>
    </source>
</reference>
<reference key="3">
    <citation type="journal article" date="2004" name="Nature">
        <title>DNA sequence and analysis of human chromosome 9.</title>
        <authorList>
            <person name="Humphray S.J."/>
            <person name="Oliver K."/>
            <person name="Hunt A.R."/>
            <person name="Plumb R.W."/>
            <person name="Loveland J.E."/>
            <person name="Howe K.L."/>
            <person name="Andrews T.D."/>
            <person name="Searle S."/>
            <person name="Hunt S.E."/>
            <person name="Scott C.E."/>
            <person name="Jones M.C."/>
            <person name="Ainscough R."/>
            <person name="Almeida J.P."/>
            <person name="Ambrose K.D."/>
            <person name="Ashwell R.I.S."/>
            <person name="Babbage A.K."/>
            <person name="Babbage S."/>
            <person name="Bagguley C.L."/>
            <person name="Bailey J."/>
            <person name="Banerjee R."/>
            <person name="Barker D.J."/>
            <person name="Barlow K.F."/>
            <person name="Bates K."/>
            <person name="Beasley H."/>
            <person name="Beasley O."/>
            <person name="Bird C.P."/>
            <person name="Bray-Allen S."/>
            <person name="Brown A.J."/>
            <person name="Brown J.Y."/>
            <person name="Burford D."/>
            <person name="Burrill W."/>
            <person name="Burton J."/>
            <person name="Carder C."/>
            <person name="Carter N.P."/>
            <person name="Chapman J.C."/>
            <person name="Chen Y."/>
            <person name="Clarke G."/>
            <person name="Clark S.Y."/>
            <person name="Clee C.M."/>
            <person name="Clegg S."/>
            <person name="Collier R.E."/>
            <person name="Corby N."/>
            <person name="Crosier M."/>
            <person name="Cummings A.T."/>
            <person name="Davies J."/>
            <person name="Dhami P."/>
            <person name="Dunn M."/>
            <person name="Dutta I."/>
            <person name="Dyer L.W."/>
            <person name="Earthrowl M.E."/>
            <person name="Faulkner L."/>
            <person name="Fleming C.J."/>
            <person name="Frankish A."/>
            <person name="Frankland J.A."/>
            <person name="French L."/>
            <person name="Fricker D.G."/>
            <person name="Garner P."/>
            <person name="Garnett J."/>
            <person name="Ghori J."/>
            <person name="Gilbert J.G.R."/>
            <person name="Glison C."/>
            <person name="Grafham D.V."/>
            <person name="Gribble S."/>
            <person name="Griffiths C."/>
            <person name="Griffiths-Jones S."/>
            <person name="Grocock R."/>
            <person name="Guy J."/>
            <person name="Hall R.E."/>
            <person name="Hammond S."/>
            <person name="Harley J.L."/>
            <person name="Harrison E.S.I."/>
            <person name="Hart E.A."/>
            <person name="Heath P.D."/>
            <person name="Henderson C.D."/>
            <person name="Hopkins B.L."/>
            <person name="Howard P.J."/>
            <person name="Howden P.J."/>
            <person name="Huckle E."/>
            <person name="Johnson C."/>
            <person name="Johnson D."/>
            <person name="Joy A.A."/>
            <person name="Kay M."/>
            <person name="Keenan S."/>
            <person name="Kershaw J.K."/>
            <person name="Kimberley A.M."/>
            <person name="King A."/>
            <person name="Knights A."/>
            <person name="Laird G.K."/>
            <person name="Langford C."/>
            <person name="Lawlor S."/>
            <person name="Leongamornlert D.A."/>
            <person name="Leversha M."/>
            <person name="Lloyd C."/>
            <person name="Lloyd D.M."/>
            <person name="Lovell J."/>
            <person name="Martin S."/>
            <person name="Mashreghi-Mohammadi M."/>
            <person name="Matthews L."/>
            <person name="McLaren S."/>
            <person name="McLay K.E."/>
            <person name="McMurray A."/>
            <person name="Milne S."/>
            <person name="Nickerson T."/>
            <person name="Nisbett J."/>
            <person name="Nordsiek G."/>
            <person name="Pearce A.V."/>
            <person name="Peck A.I."/>
            <person name="Porter K.M."/>
            <person name="Pandian R."/>
            <person name="Pelan S."/>
            <person name="Phillimore B."/>
            <person name="Povey S."/>
            <person name="Ramsey Y."/>
            <person name="Rand V."/>
            <person name="Scharfe M."/>
            <person name="Sehra H.K."/>
            <person name="Shownkeen R."/>
            <person name="Sims S.K."/>
            <person name="Skuce C.D."/>
            <person name="Smith M."/>
            <person name="Steward C.A."/>
            <person name="Swarbreck D."/>
            <person name="Sycamore N."/>
            <person name="Tester J."/>
            <person name="Thorpe A."/>
            <person name="Tracey A."/>
            <person name="Tromans A."/>
            <person name="Thomas D.W."/>
            <person name="Wall M."/>
            <person name="Wallis J.M."/>
            <person name="West A.P."/>
            <person name="Whitehead S.L."/>
            <person name="Willey D.L."/>
            <person name="Williams S.A."/>
            <person name="Wilming L."/>
            <person name="Wray P.W."/>
            <person name="Young L."/>
            <person name="Ashurst J.L."/>
            <person name="Coulson A."/>
            <person name="Blocker H."/>
            <person name="Durbin R.M."/>
            <person name="Sulston J.E."/>
            <person name="Hubbard T."/>
            <person name="Jackson M.J."/>
            <person name="Bentley D.R."/>
            <person name="Beck S."/>
            <person name="Rogers J."/>
            <person name="Dunham I."/>
        </authorList>
    </citation>
    <scope>NUCLEOTIDE SEQUENCE [LARGE SCALE GENOMIC DNA]</scope>
</reference>
<reference key="4">
    <citation type="submission" date="2005-07" db="EMBL/GenBank/DDBJ databases">
        <authorList>
            <person name="Mural R.J."/>
            <person name="Istrail S."/>
            <person name="Sutton G.G."/>
            <person name="Florea L."/>
            <person name="Halpern A.L."/>
            <person name="Mobarry C.M."/>
            <person name="Lippert R."/>
            <person name="Walenz B."/>
            <person name="Shatkay H."/>
            <person name="Dew I."/>
            <person name="Miller J.R."/>
            <person name="Flanigan M.J."/>
            <person name="Edwards N.J."/>
            <person name="Bolanos R."/>
            <person name="Fasulo D."/>
            <person name="Halldorsson B.V."/>
            <person name="Hannenhalli S."/>
            <person name="Turner R."/>
            <person name="Yooseph S."/>
            <person name="Lu F."/>
            <person name="Nusskern D.R."/>
            <person name="Shue B.C."/>
            <person name="Zheng X.H."/>
            <person name="Zhong F."/>
            <person name="Delcher A.L."/>
            <person name="Huson D.H."/>
            <person name="Kravitz S.A."/>
            <person name="Mouchard L."/>
            <person name="Reinert K."/>
            <person name="Remington K.A."/>
            <person name="Clark A.G."/>
            <person name="Waterman M.S."/>
            <person name="Eichler E.E."/>
            <person name="Adams M.D."/>
            <person name="Hunkapiller M.W."/>
            <person name="Myers E.W."/>
            <person name="Venter J.C."/>
        </authorList>
    </citation>
    <scope>NUCLEOTIDE SEQUENCE [LARGE SCALE GENOMIC DNA]</scope>
</reference>
<reference key="5">
    <citation type="journal article" date="2004" name="Genome Res.">
        <title>The status, quality, and expansion of the NIH full-length cDNA project: the Mammalian Gene Collection (MGC).</title>
        <authorList>
            <consortium name="The MGC Project Team"/>
        </authorList>
    </citation>
    <scope>NUCLEOTIDE SEQUENCE [LARGE SCALE MRNA] (ISOFORMS 1 AND 2)</scope>
    <source>
        <tissue>Brain</tissue>
        <tissue>Lung</tissue>
    </source>
</reference>
<reference key="6">
    <citation type="journal article" date="1999" name="Mol. Cell">
        <title>Identification of the major intestinal fatty acid transport protein.</title>
        <authorList>
            <person name="Stahl A."/>
            <person name="Hirsch D.J."/>
            <person name="Gimeno R.E."/>
            <person name="Punreddy S."/>
            <person name="Ge P."/>
            <person name="Watson N."/>
            <person name="Patel S."/>
            <person name="Kotler M."/>
            <person name="Raimondi A."/>
            <person name="Tartaglia L.A."/>
            <person name="Lodish H.F."/>
        </authorList>
    </citation>
    <scope>FUNCTION</scope>
    <scope>TRANSPORT ACTIVITY</scope>
</reference>
<reference key="7">
    <citation type="journal article" date="2003" name="J. Biol. Chem.">
        <title>Characterization of a heart-specific fatty acid transport protein.</title>
        <authorList>
            <person name="Gimeno R.E."/>
            <person name="Ortegon A.M."/>
            <person name="Patel S."/>
            <person name="Punreddy S."/>
            <person name="Ge P."/>
            <person name="Sun Y."/>
            <person name="Lodish H.F."/>
            <person name="Stahl A."/>
        </authorList>
    </citation>
    <scope>FUNCTION</scope>
    <scope>TRANSPORT ACTIVITY</scope>
</reference>
<reference key="8">
    <citation type="journal article" date="2010" name="J. Biomol. Screen.">
        <title>Development and validation of a high-throughput screening assay for human long-chain fatty acid transport proteins 4 and 5.</title>
        <authorList>
            <person name="Zhou W."/>
            <person name="Madrid P."/>
            <person name="Fluitt A."/>
            <person name="Stahl A."/>
            <person name="Xie X.S."/>
        </authorList>
    </citation>
    <scope>FUNCTION</scope>
    <scope>TRANSPORT ACTIVITY</scope>
</reference>
<reference key="9">
    <citation type="journal article" date="2011" name="BMC Syst. Biol.">
        <title>Initial characterization of the human central proteome.</title>
        <authorList>
            <person name="Burkard T.R."/>
            <person name="Planyavsky M."/>
            <person name="Kaupe I."/>
            <person name="Breitwieser F.P."/>
            <person name="Buerckstuemmer T."/>
            <person name="Bennett K.L."/>
            <person name="Superti-Furga G."/>
            <person name="Colinge J."/>
        </authorList>
    </citation>
    <scope>IDENTIFICATION BY MASS SPECTROMETRY [LARGE SCALE ANALYSIS]</scope>
</reference>
<reference key="10">
    <citation type="journal article" date="2011" name="J. Neurochem.">
        <title>Fatty acid transport protein expression in human brain and potential role in fatty acid transport across human brain microvessel endothelial cells.</title>
        <authorList>
            <person name="Mitchell R.W."/>
            <person name="On N.H."/>
            <person name="Del Bigio M.R."/>
            <person name="Miller D.W."/>
            <person name="Hatch G.M."/>
        </authorList>
    </citation>
    <scope>FUNCTION</scope>
    <scope>TRANSPORT ACTIVITY</scope>
    <scope>TISSUE SPECIFICITY</scope>
</reference>
<reference key="11">
    <citation type="journal article" date="2011" name="Int. J. Med. Sci.">
        <title>Overexpression of CD36 and acyl-CoA synthetases FATP2, FATP4 and ACSL1 increases fatty acid uptake in human hepatoma cells.</title>
        <authorList>
            <person name="Krammer J."/>
            <person name="Digel M."/>
            <person name="Ehehalt F."/>
            <person name="Stremmel W."/>
            <person name="Fuellekrug J."/>
            <person name="Ehehalt R."/>
        </authorList>
    </citation>
    <scope>FUNCTION</scope>
    <scope>CATALYTIC ACTIVITY</scope>
    <scope>TRANSPORT ACTIVITY</scope>
    <scope>SUBCELLULAR LOCATION</scope>
</reference>
<reference key="12">
    <citation type="journal article" date="2013" name="Biochem. Biophys. Res. Commun.">
        <title>Identification of acyl-CoA synthetases involved in the mammalian sphingosine 1-phosphate metabolic pathway.</title>
        <authorList>
            <person name="Ohkuni A."/>
            <person name="Ohno Y."/>
            <person name="Kihara A."/>
        </authorList>
    </citation>
    <scope>CATALYTIC ACTIVITY</scope>
    <scope>SUBCELLULAR LOCATION</scope>
    <scope>TISSUE SPECIFICITY</scope>
</reference>
<reference key="13">
    <citation type="journal article" date="2004" name="J. Clin. Endocrinol. Metab.">
        <title>Genetic and structural evaluation of fatty acid transport protein-4 in relation to markers of the insulin resistance syndrome.</title>
        <authorList>
            <person name="Gertow K."/>
            <person name="Bellanda M."/>
            <person name="Eriksson P."/>
            <person name="Boquist S."/>
            <person name="Hamsten A."/>
            <person name="Sunnerhagen M."/>
            <person name="Fisher R.M."/>
        </authorList>
    </citation>
    <scope>VARIANT SER-209</scope>
</reference>
<reference key="14">
    <citation type="journal article" date="2009" name="Am. J. Hum. Genet.">
        <title>Mutations in the fatty acid transport protein 4 gene cause the ichthyosis prematurity syndrome.</title>
        <authorList>
            <person name="Klar J."/>
            <person name="Schweiger M."/>
            <person name="Zimmerman R."/>
            <person name="Zechner R."/>
            <person name="Li H."/>
            <person name="Torma H."/>
            <person name="Vahlquist A."/>
            <person name="Bouadjar B."/>
            <person name="Dahl N."/>
            <person name="Fischer J."/>
        </authorList>
    </citation>
    <scope>VARIANTS IPS THR-92; PRO-247; ARG-300 AND HIS-583</scope>
</reference>
<reference key="15">
    <citation type="journal article" date="2010" name="Am. J. Med. Genet. A">
        <title>A novel mutation in the fatty acid transport protein 4 gene in a patient initially described as affected by self-healing congenital verruciform hyperkeratosis.</title>
        <authorList>
            <person name="Morice-Picard F."/>
            <person name="Leaute-Labreze C."/>
            <person name="Decor A."/>
            <person name="Boralevi F."/>
            <person name="Lacombe D."/>
            <person name="Taieb A."/>
            <person name="Fischer J."/>
        </authorList>
    </citation>
    <scope>VARIANT IPS CYS-374</scope>
</reference>
<protein>
    <recommendedName>
        <fullName evidence="16">Long-chain fatty acid transport protein 4</fullName>
        <shortName evidence="14">FATP-4</shortName>
        <shortName>Fatty acid transport protein 4</shortName>
    </recommendedName>
    <alternativeName>
        <fullName evidence="1">Arachidonate--CoA ligase</fullName>
        <ecNumber evidence="1">6.2.1.15</ecNumber>
    </alternativeName>
    <alternativeName>
        <fullName evidence="1">Long-chain-fatty-acid--CoA ligase</fullName>
        <ecNumber evidence="10 11">6.2.1.3</ecNumber>
    </alternativeName>
    <alternativeName>
        <fullName>Solute carrier family 27 member 4</fullName>
    </alternativeName>
    <alternativeName>
        <fullName evidence="15">Very long-chain acyl-CoA synthetase 4</fullName>
        <shortName evidence="15">ACSVL4</shortName>
        <ecNumber evidence="1">6.2.1.-</ecNumber>
    </alternativeName>
</protein>
<comment type="function">
    <text evidence="1 3 4 7 9 10 11">Mediates the levels of long-chain fatty acids (LCFA) in the cell by facilitating their transport across cell membranes (PubMed:10518211, PubMed:12556534, PubMed:20448275, PubMed:21395585, PubMed:22022213). Appears to be the principal fatty acid transporter in small intestinal enterocytes (PubMed:20448275). Also functions as an acyl-CoA ligase catalyzing the ATP-dependent formation of fatty acyl-CoA using LCFA and very-long-chain fatty acids (VLCFA) as substrates, which prevents fatty acid efflux from cells and might drive more fatty acid uptake (PubMed:22022213, PubMed:24269233). Plays a role in the formation of the epidermal barrier. Required for fat absorption in early embryogenesis (By similarity). Probably involved in fatty acid transport across the blood barrier (PubMed:21395585). Indirectly inhibits RPE65 via substrate competition and via production of VLCFA derivatives like lignoceroyl-CoA. Prevents light-induced degeneration of rods and cones (By similarity).</text>
</comment>
<comment type="catalytic activity">
    <reaction evidence="3 4 7 9 10">
        <text>a fatty acid(in) = a fatty acid(out)</text>
        <dbReference type="Rhea" id="RHEA:38879"/>
        <dbReference type="ChEBI" id="CHEBI:28868"/>
    </reaction>
</comment>
<comment type="catalytic activity">
    <reaction evidence="4 9">
        <text>(9Z,12Z)-octadecadienoate(out) = (9Z,12Z)-octadecadienoate(in)</text>
        <dbReference type="Rhea" id="RHEA:45264"/>
        <dbReference type="ChEBI" id="CHEBI:30245"/>
    </reaction>
</comment>
<comment type="catalytic activity">
    <reaction evidence="3 4 10">
        <text>(9Z)-octadecenoate(out) = (9Z)-octadecenoate(in)</text>
        <dbReference type="Rhea" id="RHEA:33655"/>
        <dbReference type="ChEBI" id="CHEBI:30823"/>
    </reaction>
</comment>
<comment type="catalytic activity">
    <reaction evidence="3 4">
        <text>hexadecanoate(out) = hexadecanoate(in)</text>
        <dbReference type="Rhea" id="RHEA:45256"/>
        <dbReference type="ChEBI" id="CHEBI:7896"/>
    </reaction>
</comment>
<comment type="catalytic activity">
    <reaction evidence="10 11">
        <text>a long-chain fatty acid + ATP + CoA = a long-chain fatty acyl-CoA + AMP + diphosphate</text>
        <dbReference type="Rhea" id="RHEA:15421"/>
        <dbReference type="ChEBI" id="CHEBI:30616"/>
        <dbReference type="ChEBI" id="CHEBI:33019"/>
        <dbReference type="ChEBI" id="CHEBI:57287"/>
        <dbReference type="ChEBI" id="CHEBI:57560"/>
        <dbReference type="ChEBI" id="CHEBI:83139"/>
        <dbReference type="ChEBI" id="CHEBI:456215"/>
        <dbReference type="EC" id="6.2.1.3"/>
    </reaction>
    <physiologicalReaction direction="left-to-right" evidence="11 17">
        <dbReference type="Rhea" id="RHEA:15422"/>
    </physiologicalReaction>
</comment>
<comment type="catalytic activity">
    <reaction evidence="11">
        <text>hexadecanoate + ATP + CoA = hexadecanoyl-CoA + AMP + diphosphate</text>
        <dbReference type="Rhea" id="RHEA:30751"/>
        <dbReference type="ChEBI" id="CHEBI:7896"/>
        <dbReference type="ChEBI" id="CHEBI:30616"/>
        <dbReference type="ChEBI" id="CHEBI:33019"/>
        <dbReference type="ChEBI" id="CHEBI:57287"/>
        <dbReference type="ChEBI" id="CHEBI:57379"/>
        <dbReference type="ChEBI" id="CHEBI:456215"/>
    </reaction>
    <physiologicalReaction direction="left-to-right" evidence="11">
        <dbReference type="Rhea" id="RHEA:30752"/>
    </physiologicalReaction>
</comment>
<comment type="catalytic activity">
    <reaction evidence="11">
        <text>(E)-hexadec-2-enoate + ATP + CoA = (2E)-hexadecenoyl-CoA + AMP + diphosphate</text>
        <dbReference type="Rhea" id="RHEA:36139"/>
        <dbReference type="ChEBI" id="CHEBI:30616"/>
        <dbReference type="ChEBI" id="CHEBI:33019"/>
        <dbReference type="ChEBI" id="CHEBI:57287"/>
        <dbReference type="ChEBI" id="CHEBI:61526"/>
        <dbReference type="ChEBI" id="CHEBI:72745"/>
        <dbReference type="ChEBI" id="CHEBI:456215"/>
    </reaction>
    <physiologicalReaction direction="left-to-right" evidence="11">
        <dbReference type="Rhea" id="RHEA:36140"/>
    </physiologicalReaction>
</comment>
<comment type="catalytic activity">
    <reaction evidence="10">
        <text>(9Z)-octadecenoate + ATP + CoA = (9Z)-octadecenoyl-CoA + AMP + diphosphate</text>
        <dbReference type="Rhea" id="RHEA:33607"/>
        <dbReference type="ChEBI" id="CHEBI:30616"/>
        <dbReference type="ChEBI" id="CHEBI:30823"/>
        <dbReference type="ChEBI" id="CHEBI:33019"/>
        <dbReference type="ChEBI" id="CHEBI:57287"/>
        <dbReference type="ChEBI" id="CHEBI:57387"/>
        <dbReference type="ChEBI" id="CHEBI:456215"/>
    </reaction>
    <physiologicalReaction direction="left-to-right" evidence="17">
        <dbReference type="Rhea" id="RHEA:33608"/>
    </physiologicalReaction>
</comment>
<comment type="catalytic activity">
    <reaction evidence="1">
        <text>(5Z,8Z,11Z,14Z)-eicosatetraenoate + ATP + CoA = (5Z,8Z,11Z,14Z)-eicosatetraenoyl-CoA + AMP + diphosphate</text>
        <dbReference type="Rhea" id="RHEA:19713"/>
        <dbReference type="ChEBI" id="CHEBI:30616"/>
        <dbReference type="ChEBI" id="CHEBI:32395"/>
        <dbReference type="ChEBI" id="CHEBI:33019"/>
        <dbReference type="ChEBI" id="CHEBI:57287"/>
        <dbReference type="ChEBI" id="CHEBI:57368"/>
        <dbReference type="ChEBI" id="CHEBI:456215"/>
        <dbReference type="EC" id="6.2.1.15"/>
    </reaction>
    <physiologicalReaction direction="left-to-right" evidence="1">
        <dbReference type="Rhea" id="RHEA:19714"/>
    </physiologicalReaction>
</comment>
<comment type="catalytic activity">
    <reaction evidence="1">
        <text>a very long-chain fatty acid + ATP + CoA = a very long-chain fatty acyl-CoA + AMP + diphosphate</text>
        <dbReference type="Rhea" id="RHEA:54536"/>
        <dbReference type="ChEBI" id="CHEBI:30616"/>
        <dbReference type="ChEBI" id="CHEBI:33019"/>
        <dbReference type="ChEBI" id="CHEBI:57287"/>
        <dbReference type="ChEBI" id="CHEBI:58950"/>
        <dbReference type="ChEBI" id="CHEBI:138261"/>
        <dbReference type="ChEBI" id="CHEBI:456215"/>
    </reaction>
    <physiologicalReaction direction="left-to-right" evidence="1">
        <dbReference type="Rhea" id="RHEA:54537"/>
    </physiologicalReaction>
</comment>
<comment type="catalytic activity">
    <reaction evidence="1">
        <text>tetracosanoate + ATP + CoA = tetracosanoyl-CoA + AMP + diphosphate</text>
        <dbReference type="Rhea" id="RHEA:33639"/>
        <dbReference type="ChEBI" id="CHEBI:30616"/>
        <dbReference type="ChEBI" id="CHEBI:31014"/>
        <dbReference type="ChEBI" id="CHEBI:33019"/>
        <dbReference type="ChEBI" id="CHEBI:57287"/>
        <dbReference type="ChEBI" id="CHEBI:65052"/>
        <dbReference type="ChEBI" id="CHEBI:456215"/>
    </reaction>
    <physiologicalReaction direction="left-to-right" evidence="1">
        <dbReference type="Rhea" id="RHEA:33640"/>
    </physiologicalReaction>
</comment>
<comment type="interaction">
    <interactant intactId="EBI-12898981">
        <id>Q6P1M0-2</id>
    </interactant>
    <interactant intactId="EBI-5235340">
        <id>Q7Z699</id>
        <label>SPRED1</label>
    </interactant>
    <organismsDiffer>false</organismsDiffer>
    <experiments>3</experiments>
</comment>
<comment type="interaction">
    <interactant intactId="EBI-12898981">
        <id>Q6P1M0-2</id>
    </interactant>
    <interactant intactId="EBI-752030">
        <id>Q96A09</id>
        <label>TENT5B</label>
    </interactant>
    <organismsDiffer>false</organismsDiffer>
    <experiments>3</experiments>
</comment>
<comment type="interaction">
    <interactant intactId="EBI-12898981">
        <id>Q6P1M0-2</id>
    </interactant>
    <interactant intactId="EBI-1048893">
        <id>P54577</id>
        <label>YARS1</label>
    </interactant>
    <organismsDiffer>false</organismsDiffer>
    <experiments>3</experiments>
</comment>
<comment type="subcellular location">
    <subcellularLocation>
        <location evidence="10 18">Endoplasmic reticulum membrane</location>
        <topology evidence="2">Multi-pass membrane protein</topology>
    </subcellularLocation>
</comment>
<comment type="alternative products">
    <event type="alternative splicing"/>
    <isoform>
        <id>Q6P1M0-1</id>
        <name>1</name>
        <sequence type="displayed"/>
    </isoform>
    <isoform>
        <id>Q6P1M0-2</id>
        <name>2</name>
        <sequence type="described" ref="VSP_055808 VSP_055809"/>
    </isoform>
</comment>
<comment type="tissue specificity">
    <text evidence="9 11 12">Expressed at highest levels in brain, testis, colon and kidney. Expressed at medium levels in heart and liver, small intestine and stomach. Expressed at low levels in peripheral leukocytes, bone marrow, skeletal muscle and aorta. Expressed in adipose tissue (PubMed:24269233, PubMed:9878842). Expressed in brain gray matter (PubMed:21395585).</text>
</comment>
<comment type="disease" evidence="6 8">
    <disease id="DI-02593">
        <name>Ichthyosis prematurity syndrome</name>
        <acronym>IPS</acronym>
        <description>A keratinization disorder characterized by complications in the second trimester of pregnancy resulting from polyhydramnion, with premature birth of a child with thick caseous desquamating epidermis, respiratory complications and transient eosinophilia. After recovery during the first months of life, the symptoms are relatively benign and the patients suffer from a lifelong non-scaly ichthyosis with atopic manifestations.</description>
        <dbReference type="MIM" id="608649"/>
    </disease>
    <text>The disease is caused by variants affecting the gene represented in this entry.</text>
</comment>
<comment type="miscellaneous">
    <text>SLC27A4/FATP4-mediated fatty acid uptake is associated to paramaters related to insulin resistance, which is associated with disturbed fatty acid metabolism and homeostasis, such as obesity. SLC27A4/FATP4 expression is positively correlated with acquired obesity.</text>
</comment>
<comment type="similarity">
    <text evidence="16">Belongs to the ATP-dependent AMP-binding enzyme family.</text>
</comment>
<comment type="sequence caution" evidence="16">
    <conflict type="frameshift">
        <sequence resource="EMBL-CDS" id="AAD11623"/>
    </conflict>
</comment>
<gene>
    <name evidence="19" type="primary">SLC27A4</name>
    <name evidence="15" type="synonym">ACSVL4</name>
    <name type="synonym">FATP4</name>
</gene>
<sequence>MLLGASLVGVLLFSKLVLKLPWTQVGFSLLFLYLGSGGWRFIRVFIKTIRRDIFGGLVLLKVKAKVRQCLQERRTVPILFASTVRRHPDKTALIFEGTDTHWTFRQLDEYSSSVANFLQARGLASGDVAAIFMENRNEFVGLWLGMAKLGVEAALINTNLRRDALLHCLTTSRARALVFGSEMASAICEVHASLDPSLSLFCSGSWEPGAVPPSTEHLDPLLKDAPKHLPSCPDKGFTDKLFYIYTSGTTGLPKAAIVVHSRYYRMAALVYYGFRMRPNDIVYDCLPLYHSAGNIVGIGQCLLHGMTVVIRKKFSASRFWDDCIKYNCTIVQYIGELCRYLLNQPPREAENQHQVRMALGNGLRQSIWTNFSSRFHIPQVAEFYGATECNCSLGNFDSQVGACGFNSRILSFVYPIRLVRVNEDTMELIRGPDGVCIPCQPGEPGQLVGRIIQKDPLRRFDGYLNQGANNKKIAKDVFKKGDQAYLTGDVLVMDELGYLYFRDRTGDTFRWKGENVSTTEVEGTLSRLLDMADVAVYGVEVPGTEGRAGMAAVASPTGNCDLERFAQVLEKELPLYARPIFLRLLPELHKTGTYKFQKTELRKEGFDPAIVKDPLFYLDAQKGRYVPLDQEAYSRIQAGEEKL</sequence>
<feature type="chain" id="PRO_0000193209" description="Long-chain fatty acid transport protein 4">
    <location>
        <begin position="1"/>
        <end position="643"/>
    </location>
</feature>
<feature type="transmembrane region" description="Helical" evidence="2">
    <location>
        <begin position="20"/>
        <end position="42"/>
    </location>
</feature>
<feature type="transmembrane region" description="Helical" evidence="2">
    <location>
        <begin position="139"/>
        <end position="156"/>
    </location>
</feature>
<feature type="binding site" evidence="2">
    <location>
        <begin position="243"/>
        <end position="254"/>
    </location>
    <ligand>
        <name>AMP</name>
        <dbReference type="ChEBI" id="CHEBI:456215"/>
    </ligand>
</feature>
<feature type="splice variant" id="VSP_055808" description="In isoform 2." evidence="13">
    <original>MLLGASLVGVLLFSKLVLKLPWTQVGFSLLFLYLGSGGWRFIRVFIKTIRRDIFGGLVLLKVKAKVRQCLQERRTV</original>
    <variation>MPLTLSTLLQPGRIWTGRRAAEPTPGHNAAWSLSGGGAAVLQAGAETALDPGGILPVVPLLGIWRLALHPGLHQDH</variation>
    <location>
        <begin position="1"/>
        <end position="76"/>
    </location>
</feature>
<feature type="splice variant" id="VSP_055809" description="In isoform 2." evidence="13">
    <location>
        <begin position="77"/>
        <end position="482"/>
    </location>
</feature>
<feature type="sequence variant" id="VAR_063192" description="In IPS; dbSNP:rs137853132." evidence="6">
    <original>A</original>
    <variation>T</variation>
    <location>
        <position position="92"/>
    </location>
</feature>
<feature type="sequence variant" id="VAR_023783" description="Correlates with lower body mass index, triglyceride concentrations, systolic blood pressure, insulin concentrations and homeostasis model assessment index; dbSNP:rs2240953." evidence="5">
    <original>G</original>
    <variation>S</variation>
    <location>
        <position position="209"/>
    </location>
</feature>
<feature type="sequence variant" id="VAR_063193" description="In IPS; dbSNP:rs137853133." evidence="6">
    <original>S</original>
    <variation>P</variation>
    <location>
        <position position="247"/>
    </location>
</feature>
<feature type="sequence variant" id="VAR_063194" description="In IPS; dbSNP:rs137853134." evidence="6">
    <original>Q</original>
    <variation>R</variation>
    <location>
        <position position="300"/>
    </location>
</feature>
<feature type="sequence variant" id="VAR_064500" description="In IPS; dbSNP:rs768495407." evidence="8">
    <original>R</original>
    <variation>C</variation>
    <location>
        <position position="374"/>
    </location>
</feature>
<feature type="sequence variant" id="VAR_063195" description="In IPS; dbSNP:rs137853135." evidence="6">
    <original>R</original>
    <variation>H</variation>
    <location>
        <position position="583"/>
    </location>
</feature>
<feature type="sequence conflict" description="In Ref. 1; AAD11623." evidence="16" ref="1">
    <original>L</original>
    <variation>P</variation>
    <location>
        <position position="194"/>
    </location>
</feature>
<feature type="sequence conflict" description="In Ref. 1; AAD11623." evidence="16" ref="1">
    <original>G</original>
    <variation>A</variation>
    <location>
        <position position="605"/>
    </location>
</feature>
<keyword id="KW-0025">Alternative splicing</keyword>
<keyword id="KW-0225">Disease variant</keyword>
<keyword id="KW-0256">Endoplasmic reticulum</keyword>
<keyword id="KW-0276">Fatty acid metabolism</keyword>
<keyword id="KW-0977">Ichthyosis</keyword>
<keyword id="KW-0436">Ligase</keyword>
<keyword id="KW-0443">Lipid metabolism</keyword>
<keyword id="KW-0445">Lipid transport</keyword>
<keyword id="KW-0472">Membrane</keyword>
<keyword id="KW-0547">Nucleotide-binding</keyword>
<keyword id="KW-1267">Proteomics identification</keyword>
<keyword id="KW-1185">Reference proteome</keyword>
<keyword id="KW-0812">Transmembrane</keyword>
<keyword id="KW-1133">Transmembrane helix</keyword>
<keyword id="KW-0813">Transport</keyword>
<organism>
    <name type="scientific">Homo sapiens</name>
    <name type="common">Human</name>
    <dbReference type="NCBI Taxonomy" id="9606"/>
    <lineage>
        <taxon>Eukaryota</taxon>
        <taxon>Metazoa</taxon>
        <taxon>Chordata</taxon>
        <taxon>Craniata</taxon>
        <taxon>Vertebrata</taxon>
        <taxon>Euteleostomi</taxon>
        <taxon>Mammalia</taxon>
        <taxon>Eutheria</taxon>
        <taxon>Euarchontoglires</taxon>
        <taxon>Primates</taxon>
        <taxon>Haplorrhini</taxon>
        <taxon>Catarrhini</taxon>
        <taxon>Hominidae</taxon>
        <taxon>Homo</taxon>
    </lineage>
</organism>